<dbReference type="EC" id="2.7.11.1" evidence="4"/>
<dbReference type="EMBL" id="AF314176">
    <property type="protein sequence ID" value="AAG38109.1"/>
    <property type="molecule type" value="mRNA"/>
</dbReference>
<dbReference type="EMBL" id="AL391711">
    <property type="protein sequence ID" value="CAC05444.1"/>
    <property type="molecule type" value="Genomic_DNA"/>
</dbReference>
<dbReference type="EMBL" id="CP002688">
    <property type="protein sequence ID" value="AED91858.1"/>
    <property type="molecule type" value="Genomic_DNA"/>
</dbReference>
<dbReference type="EMBL" id="AF372927">
    <property type="protein sequence ID" value="AAK50067.1"/>
    <property type="molecule type" value="mRNA"/>
</dbReference>
<dbReference type="EMBL" id="AY078037">
    <property type="protein sequence ID" value="AAL77738.1"/>
    <property type="molecule type" value="mRNA"/>
</dbReference>
<dbReference type="RefSeq" id="NP_196820.1">
    <property type="nucleotide sequence ID" value="NM_121319.5"/>
</dbReference>
<dbReference type="SMR" id="Q9FE20"/>
<dbReference type="BioGRID" id="16433">
    <property type="interactions" value="2"/>
</dbReference>
<dbReference type="DIP" id="DIP-53310N"/>
<dbReference type="FunCoup" id="Q9FE20">
    <property type="interactions" value="2500"/>
</dbReference>
<dbReference type="IntAct" id="Q9FE20">
    <property type="interactions" value="3"/>
</dbReference>
<dbReference type="STRING" id="3702.Q9FE20"/>
<dbReference type="iPTMnet" id="Q9FE20"/>
<dbReference type="SwissPalm" id="Q9FE20"/>
<dbReference type="PaxDb" id="3702-AT5G13160.1"/>
<dbReference type="ProteomicsDB" id="236798"/>
<dbReference type="EnsemblPlants" id="AT5G13160.1">
    <property type="protein sequence ID" value="AT5G13160.1"/>
    <property type="gene ID" value="AT5G13160"/>
</dbReference>
<dbReference type="GeneID" id="831155"/>
<dbReference type="Gramene" id="AT5G13160.1">
    <property type="protein sequence ID" value="AT5G13160.1"/>
    <property type="gene ID" value="AT5G13160"/>
</dbReference>
<dbReference type="KEGG" id="ath:AT5G13160"/>
<dbReference type="Araport" id="AT5G13160"/>
<dbReference type="TAIR" id="AT5G13160">
    <property type="gene designation" value="PBS1"/>
</dbReference>
<dbReference type="eggNOG" id="KOG1187">
    <property type="taxonomic scope" value="Eukaryota"/>
</dbReference>
<dbReference type="HOGENOM" id="CLU_000288_21_0_1"/>
<dbReference type="InParanoid" id="Q9FE20"/>
<dbReference type="OMA" id="NCSKREF"/>
<dbReference type="OrthoDB" id="4062651at2759"/>
<dbReference type="PhylomeDB" id="Q9FE20"/>
<dbReference type="PRO" id="PR:Q9FE20"/>
<dbReference type="Proteomes" id="UP000006548">
    <property type="component" value="Chromosome 5"/>
</dbReference>
<dbReference type="ExpressionAtlas" id="Q9FE20">
    <property type="expression patterns" value="baseline and differential"/>
</dbReference>
<dbReference type="GO" id="GO:0005886">
    <property type="term" value="C:plasma membrane"/>
    <property type="evidence" value="ECO:0000314"/>
    <property type="project" value="UniProtKB"/>
</dbReference>
<dbReference type="GO" id="GO:0005524">
    <property type="term" value="F:ATP binding"/>
    <property type="evidence" value="ECO:0007669"/>
    <property type="project" value="UniProtKB-KW"/>
</dbReference>
<dbReference type="GO" id="GO:0004672">
    <property type="term" value="F:protein kinase activity"/>
    <property type="evidence" value="ECO:0000314"/>
    <property type="project" value="TAIR"/>
</dbReference>
<dbReference type="GO" id="GO:0106310">
    <property type="term" value="F:protein serine kinase activity"/>
    <property type="evidence" value="ECO:0007669"/>
    <property type="project" value="RHEA"/>
</dbReference>
<dbReference type="GO" id="GO:0004674">
    <property type="term" value="F:protein serine/threonine kinase activity"/>
    <property type="evidence" value="ECO:0000250"/>
    <property type="project" value="TAIR"/>
</dbReference>
<dbReference type="GO" id="GO:0006952">
    <property type="term" value="P:defense response"/>
    <property type="evidence" value="ECO:0000304"/>
    <property type="project" value="TAIR"/>
</dbReference>
<dbReference type="GO" id="GO:0042742">
    <property type="term" value="P:defense response to bacterium"/>
    <property type="evidence" value="ECO:0000315"/>
    <property type="project" value="UniProtKB"/>
</dbReference>
<dbReference type="GO" id="GO:0045087">
    <property type="term" value="P:innate immune response"/>
    <property type="evidence" value="ECO:0000315"/>
    <property type="project" value="UniProtKB"/>
</dbReference>
<dbReference type="GO" id="GO:0002221">
    <property type="term" value="P:pattern recognition receptor signaling pathway"/>
    <property type="evidence" value="ECO:0000315"/>
    <property type="project" value="UniProtKB"/>
</dbReference>
<dbReference type="GO" id="GO:0046777">
    <property type="term" value="P:protein autophosphorylation"/>
    <property type="evidence" value="ECO:0000314"/>
    <property type="project" value="TAIR"/>
</dbReference>
<dbReference type="CDD" id="cd14066">
    <property type="entry name" value="STKc_IRAK"/>
    <property type="match status" value="1"/>
</dbReference>
<dbReference type="FunFam" id="1.10.510.10:FF:000032">
    <property type="entry name" value="Serine/threonine-protein kinase PBS1"/>
    <property type="match status" value="1"/>
</dbReference>
<dbReference type="FunFam" id="3.30.200.20:FF:000248">
    <property type="entry name" value="Serine/threonine-protein kinase PBS1"/>
    <property type="match status" value="1"/>
</dbReference>
<dbReference type="Gene3D" id="3.30.200.20">
    <property type="entry name" value="Phosphorylase Kinase, domain 1"/>
    <property type="match status" value="1"/>
</dbReference>
<dbReference type="Gene3D" id="1.10.510.10">
    <property type="entry name" value="Transferase(Phosphotransferase) domain 1"/>
    <property type="match status" value="1"/>
</dbReference>
<dbReference type="InterPro" id="IPR011009">
    <property type="entry name" value="Kinase-like_dom_sf"/>
</dbReference>
<dbReference type="InterPro" id="IPR000719">
    <property type="entry name" value="Prot_kinase_dom"/>
</dbReference>
<dbReference type="InterPro" id="IPR017441">
    <property type="entry name" value="Protein_kinase_ATP_BS"/>
</dbReference>
<dbReference type="InterPro" id="IPR008271">
    <property type="entry name" value="Ser/Thr_kinase_AS"/>
</dbReference>
<dbReference type="PANTHER" id="PTHR47985">
    <property type="entry name" value="OS07G0668900 PROTEIN"/>
    <property type="match status" value="1"/>
</dbReference>
<dbReference type="PANTHER" id="PTHR47985:SF44">
    <property type="entry name" value="SERINE_THREONINE-PROTEIN KINASE PBS1"/>
    <property type="match status" value="1"/>
</dbReference>
<dbReference type="Pfam" id="PF00069">
    <property type="entry name" value="Pkinase"/>
    <property type="match status" value="1"/>
</dbReference>
<dbReference type="SUPFAM" id="SSF56112">
    <property type="entry name" value="Protein kinase-like (PK-like)"/>
    <property type="match status" value="1"/>
</dbReference>
<dbReference type="PROSITE" id="PS00107">
    <property type="entry name" value="PROTEIN_KINASE_ATP"/>
    <property type="match status" value="1"/>
</dbReference>
<dbReference type="PROSITE" id="PS50011">
    <property type="entry name" value="PROTEIN_KINASE_DOM"/>
    <property type="match status" value="1"/>
</dbReference>
<dbReference type="PROSITE" id="PS00108">
    <property type="entry name" value="PROTEIN_KINASE_ST"/>
    <property type="match status" value="1"/>
</dbReference>
<comment type="function">
    <text evidence="4 5 6 7 9">Protein kinase required for plant defense mechanism mediated by the disease resistance (R) protein RPS5. In case of infection by Pseudomonas syringae, AvrPphB triggers RPS5-mediated defense mechanism via the cleavage of PBS1. Both kinase activity and cleavage by avrPphB are independently required to trigger the RPS5-mediated resistance. Contributes to PAMP-triggered immunity (PTI) signaling and defense responses downstream of FLS2.</text>
</comment>
<comment type="catalytic activity">
    <reaction evidence="4">
        <text>L-seryl-[protein] + ATP = O-phospho-L-seryl-[protein] + ADP + H(+)</text>
        <dbReference type="Rhea" id="RHEA:17989"/>
        <dbReference type="Rhea" id="RHEA-COMP:9863"/>
        <dbReference type="Rhea" id="RHEA-COMP:11604"/>
        <dbReference type="ChEBI" id="CHEBI:15378"/>
        <dbReference type="ChEBI" id="CHEBI:29999"/>
        <dbReference type="ChEBI" id="CHEBI:30616"/>
        <dbReference type="ChEBI" id="CHEBI:83421"/>
        <dbReference type="ChEBI" id="CHEBI:456216"/>
        <dbReference type="EC" id="2.7.11.1"/>
    </reaction>
</comment>
<comment type="catalytic activity">
    <reaction evidence="4">
        <text>L-threonyl-[protein] + ATP = O-phospho-L-threonyl-[protein] + ADP + H(+)</text>
        <dbReference type="Rhea" id="RHEA:46608"/>
        <dbReference type="Rhea" id="RHEA-COMP:11060"/>
        <dbReference type="Rhea" id="RHEA-COMP:11605"/>
        <dbReference type="ChEBI" id="CHEBI:15378"/>
        <dbReference type="ChEBI" id="CHEBI:30013"/>
        <dbReference type="ChEBI" id="CHEBI:30616"/>
        <dbReference type="ChEBI" id="CHEBI:61977"/>
        <dbReference type="ChEBI" id="CHEBI:456216"/>
        <dbReference type="EC" id="2.7.11.1"/>
    </reaction>
</comment>
<comment type="subunit">
    <text evidence="5 6 7">In infected plant cells, it interacts with the P.syringae virulence protein avrPphB. In uninfected plants, autophosphorylated form interacts with RPS5. Interacts with FLS2.</text>
</comment>
<comment type="interaction">
    <interactant intactId="EBI-2357898">
        <id>Q9FE20</id>
    </interactant>
    <interactant intactId="EBI-15620767">
        <id>O64973</id>
        <label>RPS5</label>
    </interactant>
    <organismsDiffer>false</organismsDiffer>
    <experiments>2</experiments>
</comment>
<comment type="subcellular location">
    <subcellularLocation>
        <location>Cell membrane</location>
        <topology evidence="8 10">Lipid-anchor</topology>
    </subcellularLocation>
</comment>
<comment type="induction">
    <text evidence="7">Induced by flagellin (flg22).</text>
</comment>
<comment type="PTM">
    <text evidence="5 6">Cleaved by avrPphB in infected plant cells. Its cleavage serves as a signal that triggers the RPS5-mediated defense system.</text>
</comment>
<comment type="PTM">
    <text evidence="13">Autophosphorylates (Probable). Autophosphorylation may be required to trigger the RPS5-mediated plant defense system.</text>
</comment>
<comment type="PTM">
    <text evidence="10">Palmitoylation at Cys-3 and Cys-6 are required for plasma membrane location that is essential for the RPS5-mediated plant defense response.</text>
</comment>
<comment type="disruption phenotype">
    <text evidence="7">Reduction in H(2)O(2) accumulation and callose deposits.</text>
</comment>
<comment type="similarity">
    <text evidence="2">Belongs to the protein kinase superfamily. Ser/Thr protein kinase family.</text>
</comment>
<proteinExistence type="evidence at protein level"/>
<evidence type="ECO:0000250" key="1">
    <source>
        <dbReference type="UniProtKB" id="O48814"/>
    </source>
</evidence>
<evidence type="ECO:0000255" key="2">
    <source>
        <dbReference type="PROSITE-ProRule" id="PRU00159"/>
    </source>
</evidence>
<evidence type="ECO:0000256" key="3">
    <source>
        <dbReference type="SAM" id="MobiDB-lite"/>
    </source>
</evidence>
<evidence type="ECO:0000269" key="4">
    <source>
    </source>
</evidence>
<evidence type="ECO:0000269" key="5">
    <source>
    </source>
</evidence>
<evidence type="ECO:0000269" key="6">
    <source>
    </source>
</evidence>
<evidence type="ECO:0000269" key="7">
    <source>
    </source>
</evidence>
<evidence type="ECO:0000269" key="8">
    <source>
    </source>
</evidence>
<evidence type="ECO:0000269" key="9">
    <source>
    </source>
</evidence>
<evidence type="ECO:0000269" key="10">
    <source>
    </source>
</evidence>
<evidence type="ECO:0000303" key="11">
    <source>
    </source>
</evidence>
<evidence type="ECO:0000303" key="12">
    <source>
    </source>
</evidence>
<evidence type="ECO:0000305" key="13"/>
<evidence type="ECO:0000305" key="14">
    <source>
    </source>
</evidence>
<evidence type="ECO:0000312" key="15">
    <source>
        <dbReference type="Araport" id="AT5G13160"/>
    </source>
</evidence>
<evidence type="ECO:0000312" key="16">
    <source>
        <dbReference type="EMBL" id="CAC05444.1"/>
    </source>
</evidence>
<evidence type="ECO:0007744" key="17">
    <source>
    </source>
</evidence>
<protein>
    <recommendedName>
        <fullName evidence="11">Serine/threonine-protein kinase PBS1</fullName>
        <ecNumber evidence="4">2.7.11.1</ecNumber>
    </recommendedName>
    <alternativeName>
        <fullName evidence="11">AvrPphB susceptible protein 1</fullName>
    </alternativeName>
</protein>
<gene>
    <name evidence="11" type="primary">PBS1</name>
    <name evidence="15" type="ordered locus">At5g13160</name>
    <name evidence="16" type="ORF">T19L5.120</name>
</gene>
<keyword id="KW-0067">ATP-binding</keyword>
<keyword id="KW-1003">Cell membrane</keyword>
<keyword id="KW-0903">Direct protein sequencing</keyword>
<keyword id="KW-0418">Kinase</keyword>
<keyword id="KW-0449">Lipoprotein</keyword>
<keyword id="KW-0472">Membrane</keyword>
<keyword id="KW-0519">Myristate</keyword>
<keyword id="KW-0547">Nucleotide-binding</keyword>
<keyword id="KW-0564">Palmitate</keyword>
<keyword id="KW-0597">Phosphoprotein</keyword>
<keyword id="KW-0611">Plant defense</keyword>
<keyword id="KW-1185">Reference proteome</keyword>
<keyword id="KW-0723">Serine/threonine-protein kinase</keyword>
<keyword id="KW-0808">Transferase</keyword>
<sequence>MGCFSCFDSSDDEKLNPVDESNHGQKKQSQPTVSNNISGLPSGGEKLSSKTNGGSKRELLLPRDGLGQIAAHTFAFRELAAATMNFHPDTFLGEGGFGRVYKGRLDSTGQVVAVKQLDRNGLQGNREFLVEVLMLSLLHHPNLVNLIGYCADGDQRLLVYEFMPLGSLEDHLHDLPPDKEALDWNMRMKIAAGAAKGLEFLHDKANPPVIYRDFKSSNILLDEGFHPKLSDFGLAKLGPTGDKSHVSTRVMGTYGYCAPEYAMTGQLTVKSDVYSFGVVFLELITGRKAIDSEMPHGEQNLVAWARPLFNDRRKFIKLADPRLKGRFPTRALYQALAVASMCIQEQAATRPLIADVVTALSYLANQAYDPSKDDSRRNRDERGARLITRNDDGGGSGSKFDLEGSEKEDSPRETARILNRDINRERAVAEAKMWGESLREKRRQSEQGTSESNSTG</sequence>
<accession>Q9FE20</accession>
<organism>
    <name type="scientific">Arabidopsis thaliana</name>
    <name type="common">Mouse-ear cress</name>
    <dbReference type="NCBI Taxonomy" id="3702"/>
    <lineage>
        <taxon>Eukaryota</taxon>
        <taxon>Viridiplantae</taxon>
        <taxon>Streptophyta</taxon>
        <taxon>Embryophyta</taxon>
        <taxon>Tracheophyta</taxon>
        <taxon>Spermatophyta</taxon>
        <taxon>Magnoliopsida</taxon>
        <taxon>eudicotyledons</taxon>
        <taxon>Gunneridae</taxon>
        <taxon>Pentapetalae</taxon>
        <taxon>rosids</taxon>
        <taxon>malvids</taxon>
        <taxon>Brassicales</taxon>
        <taxon>Brassicaceae</taxon>
        <taxon>Camelineae</taxon>
        <taxon>Arabidopsis</taxon>
    </lineage>
</organism>
<reference key="1">
    <citation type="journal article" date="2001" name="Plant J.">
        <title>The Arabidopsis PBS1 resistance gene encodes a member of a novel protein kinase subfamily.</title>
        <authorList>
            <person name="Swiderski M.R."/>
            <person name="Innes R.W."/>
        </authorList>
    </citation>
    <scope>NUCLEOTIDE SEQUENCE [MRNA]</scope>
    <scope>FUNCTION</scope>
    <scope>ENZYME ACTIVITY</scope>
    <scope>AUTOPHOSPHORYLATION</scope>
    <scope>MUTANT PBS1-2</scope>
    <scope>MUTAGENESIS OF GLY-252</scope>
</reference>
<reference key="2">
    <citation type="journal article" date="2000" name="Nature">
        <title>Sequence and analysis of chromosome 5 of the plant Arabidopsis thaliana.</title>
        <authorList>
            <person name="Tabata S."/>
            <person name="Kaneko T."/>
            <person name="Nakamura Y."/>
            <person name="Kotani H."/>
            <person name="Kato T."/>
            <person name="Asamizu E."/>
            <person name="Miyajima N."/>
            <person name="Sasamoto S."/>
            <person name="Kimura T."/>
            <person name="Hosouchi T."/>
            <person name="Kawashima K."/>
            <person name="Kohara M."/>
            <person name="Matsumoto M."/>
            <person name="Matsuno A."/>
            <person name="Muraki A."/>
            <person name="Nakayama S."/>
            <person name="Nakazaki N."/>
            <person name="Naruo K."/>
            <person name="Okumura S."/>
            <person name="Shinpo S."/>
            <person name="Takeuchi C."/>
            <person name="Wada T."/>
            <person name="Watanabe A."/>
            <person name="Yamada M."/>
            <person name="Yasuda M."/>
            <person name="Sato S."/>
            <person name="de la Bastide M."/>
            <person name="Huang E."/>
            <person name="Spiegel L."/>
            <person name="Gnoj L."/>
            <person name="O'Shaughnessy A."/>
            <person name="Preston R."/>
            <person name="Habermann K."/>
            <person name="Murray J."/>
            <person name="Johnson D."/>
            <person name="Rohlfing T."/>
            <person name="Nelson J."/>
            <person name="Stoneking T."/>
            <person name="Pepin K."/>
            <person name="Spieth J."/>
            <person name="Sekhon M."/>
            <person name="Armstrong J."/>
            <person name="Becker M."/>
            <person name="Belter E."/>
            <person name="Cordum H."/>
            <person name="Cordes M."/>
            <person name="Courtney L."/>
            <person name="Courtney W."/>
            <person name="Dante M."/>
            <person name="Du H."/>
            <person name="Edwards J."/>
            <person name="Fryman J."/>
            <person name="Haakensen B."/>
            <person name="Lamar E."/>
            <person name="Latreille P."/>
            <person name="Leonard S."/>
            <person name="Meyer R."/>
            <person name="Mulvaney E."/>
            <person name="Ozersky P."/>
            <person name="Riley A."/>
            <person name="Strowmatt C."/>
            <person name="Wagner-McPherson C."/>
            <person name="Wollam A."/>
            <person name="Yoakum M."/>
            <person name="Bell M."/>
            <person name="Dedhia N."/>
            <person name="Parnell L."/>
            <person name="Shah R."/>
            <person name="Rodriguez M."/>
            <person name="Hoon See L."/>
            <person name="Vil D."/>
            <person name="Baker J."/>
            <person name="Kirchoff K."/>
            <person name="Toth K."/>
            <person name="King L."/>
            <person name="Bahret A."/>
            <person name="Miller B."/>
            <person name="Marra M.A."/>
            <person name="Martienssen R."/>
            <person name="McCombie W.R."/>
            <person name="Wilson R.K."/>
            <person name="Murphy G."/>
            <person name="Bancroft I."/>
            <person name="Volckaert G."/>
            <person name="Wambutt R."/>
            <person name="Duesterhoeft A."/>
            <person name="Stiekema W."/>
            <person name="Pohl T."/>
            <person name="Entian K.-D."/>
            <person name="Terryn N."/>
            <person name="Hartley N."/>
            <person name="Bent E."/>
            <person name="Johnson S."/>
            <person name="Langham S.-A."/>
            <person name="McCullagh B."/>
            <person name="Robben J."/>
            <person name="Grymonprez B."/>
            <person name="Zimmermann W."/>
            <person name="Ramsperger U."/>
            <person name="Wedler H."/>
            <person name="Balke K."/>
            <person name="Wedler E."/>
            <person name="Peters S."/>
            <person name="van Staveren M."/>
            <person name="Dirkse W."/>
            <person name="Mooijman P."/>
            <person name="Klein Lankhorst R."/>
            <person name="Weitzenegger T."/>
            <person name="Bothe G."/>
            <person name="Rose M."/>
            <person name="Hauf J."/>
            <person name="Berneiser S."/>
            <person name="Hempel S."/>
            <person name="Feldpausch M."/>
            <person name="Lamberth S."/>
            <person name="Villarroel R."/>
            <person name="Gielen J."/>
            <person name="Ardiles W."/>
            <person name="Bents O."/>
            <person name="Lemcke K."/>
            <person name="Kolesov G."/>
            <person name="Mayer K.F.X."/>
            <person name="Rudd S."/>
            <person name="Schoof H."/>
            <person name="Schueller C."/>
            <person name="Zaccaria P."/>
            <person name="Mewes H.-W."/>
            <person name="Bevan M."/>
            <person name="Fransz P.F."/>
        </authorList>
    </citation>
    <scope>NUCLEOTIDE SEQUENCE [LARGE SCALE GENOMIC DNA]</scope>
    <source>
        <strain>cv. Columbia</strain>
    </source>
</reference>
<reference key="3">
    <citation type="journal article" date="2017" name="Plant J.">
        <title>Araport11: a complete reannotation of the Arabidopsis thaliana reference genome.</title>
        <authorList>
            <person name="Cheng C.Y."/>
            <person name="Krishnakumar V."/>
            <person name="Chan A.P."/>
            <person name="Thibaud-Nissen F."/>
            <person name="Schobel S."/>
            <person name="Town C.D."/>
        </authorList>
    </citation>
    <scope>GENOME REANNOTATION</scope>
    <source>
        <strain>cv. Columbia</strain>
    </source>
</reference>
<reference key="4">
    <citation type="journal article" date="2003" name="Science">
        <title>Empirical analysis of transcriptional activity in the Arabidopsis genome.</title>
        <authorList>
            <person name="Yamada K."/>
            <person name="Lim J."/>
            <person name="Dale J.M."/>
            <person name="Chen H."/>
            <person name="Shinn P."/>
            <person name="Palm C.J."/>
            <person name="Southwick A.M."/>
            <person name="Wu H.C."/>
            <person name="Kim C.J."/>
            <person name="Nguyen M."/>
            <person name="Pham P.K."/>
            <person name="Cheuk R.F."/>
            <person name="Karlin-Newmann G."/>
            <person name="Liu S.X."/>
            <person name="Lam B."/>
            <person name="Sakano H."/>
            <person name="Wu T."/>
            <person name="Yu G."/>
            <person name="Miranda M."/>
            <person name="Quach H.L."/>
            <person name="Tripp M."/>
            <person name="Chang C.H."/>
            <person name="Lee J.M."/>
            <person name="Toriumi M.J."/>
            <person name="Chan M.M."/>
            <person name="Tang C.C."/>
            <person name="Onodera C.S."/>
            <person name="Deng J.M."/>
            <person name="Akiyama K."/>
            <person name="Ansari Y."/>
            <person name="Arakawa T."/>
            <person name="Banh J."/>
            <person name="Banno F."/>
            <person name="Bowser L."/>
            <person name="Brooks S.Y."/>
            <person name="Carninci P."/>
            <person name="Chao Q."/>
            <person name="Choy N."/>
            <person name="Enju A."/>
            <person name="Goldsmith A.D."/>
            <person name="Gurjal M."/>
            <person name="Hansen N.F."/>
            <person name="Hayashizaki Y."/>
            <person name="Johnson-Hopson C."/>
            <person name="Hsuan V.W."/>
            <person name="Iida K."/>
            <person name="Karnes M."/>
            <person name="Khan S."/>
            <person name="Koesema E."/>
            <person name="Ishida J."/>
            <person name="Jiang P.X."/>
            <person name="Jones T."/>
            <person name="Kawai J."/>
            <person name="Kamiya A."/>
            <person name="Meyers C."/>
            <person name="Nakajima M."/>
            <person name="Narusaka M."/>
            <person name="Seki M."/>
            <person name="Sakurai T."/>
            <person name="Satou M."/>
            <person name="Tamse R."/>
            <person name="Vaysberg M."/>
            <person name="Wallender E.K."/>
            <person name="Wong C."/>
            <person name="Yamamura Y."/>
            <person name="Yuan S."/>
            <person name="Shinozaki K."/>
            <person name="Davis R.W."/>
            <person name="Theologis A."/>
            <person name="Ecker J.R."/>
        </authorList>
    </citation>
    <scope>NUCLEOTIDE SEQUENCE [LARGE SCALE MRNA]</scope>
    <source>
        <strain>cv. Columbia</strain>
    </source>
</reference>
<reference key="5">
    <citation type="journal article" date="2003" name="Science">
        <title>Cleavage of Arabidopsis PBS1 by a bacterial type III effector.</title>
        <authorList>
            <person name="Shao F."/>
            <person name="Golstein C."/>
            <person name="Ade J."/>
            <person name="Stoutemyer M."/>
            <person name="Dixon J.E."/>
            <person name="Innes R.W."/>
        </authorList>
    </citation>
    <scope>PARTIAL PROTEIN SEQUENCE</scope>
    <scope>FUNCTION</scope>
    <scope>CLEAVAGE</scope>
    <scope>INTERACTION WITH AVRPPHB</scope>
    <scope>MUTAGENESIS OF LYS-115; GLY-241; ASP-242 AND LYS-243</scope>
</reference>
<reference key="6">
    <citation type="journal article" date="2007" name="Proc. Natl. Acad. Sci. U.S.A.">
        <title>Indirect activation of a plant nucleotide binding site-leucine-rich repeat protein by a bacterial protease.</title>
        <authorList>
            <person name="Ade J."/>
            <person name="DeYoung B.J."/>
            <person name="Golstein C."/>
            <person name="Innes R.W."/>
        </authorList>
    </citation>
    <scope>FUNCTION</scope>
    <scope>INTERACTION WITH RPS5</scope>
    <scope>MUTAGENESIS OF LYS-115 AND GLY-252</scope>
</reference>
<reference key="7">
    <citation type="journal article" date="2009" name="Plant Physiol.">
        <title>Large-scale Arabidopsis phosphoproteome profiling reveals novel chloroplast kinase substrates and phosphorylation networks.</title>
        <authorList>
            <person name="Reiland S."/>
            <person name="Messerli G."/>
            <person name="Baerenfaller K."/>
            <person name="Gerrits B."/>
            <person name="Endler A."/>
            <person name="Grossmann J."/>
            <person name="Gruissem W."/>
            <person name="Baginsky S."/>
        </authorList>
    </citation>
    <scope>PHOSPHORYLATION [LARGE SCALE ANALYSIS] AT SER-21</scope>
    <scope>IDENTIFICATION BY MASS SPECTROMETRY [LARGE SCALE ANALYSIS]</scope>
</reference>
<reference key="8">
    <citation type="journal article" date="2010" name="Cell Host Microbe">
        <title>Receptor-like cytoplasmic kinases integrate signaling from multiple plant immune receptors and are targeted by a Pseudomonas syringae effector.</title>
        <authorList>
            <person name="Zhang J."/>
            <person name="Li W."/>
            <person name="Xiang T."/>
            <person name="Liu Z."/>
            <person name="Laluk K."/>
            <person name="Ding X."/>
            <person name="Zou Y."/>
            <person name="Gao M."/>
            <person name="Zhang X."/>
            <person name="Chen S."/>
            <person name="Mengiste T."/>
            <person name="Zhang Y."/>
            <person name="Zhou J.M."/>
        </authorList>
    </citation>
    <scope>INTERACTION WITH FLS2</scope>
    <scope>DISRUPTION PHENOTYPE</scope>
    <scope>FUNCTION</scope>
    <scope>INDUCTION BY FLAGELLIN</scope>
</reference>
<reference key="9">
    <citation type="journal article" date="2012" name="Cell. Microbiol.">
        <title>Activation of a plant nucleotide binding-leucine rich repeat disease resistance protein by a modified self protein.</title>
        <authorList>
            <person name="DeYoung B.J."/>
            <person name="Qi D."/>
            <person name="Kim S.H."/>
            <person name="Burke T.P."/>
            <person name="Innes R.W."/>
        </authorList>
    </citation>
    <scope>FUNCTION</scope>
    <scope>INTERACTION WITH RPS5</scope>
    <scope>MUTAGENESIS OF LYS-115 AND GLY-252</scope>
</reference>
<reference key="10">
    <citation type="journal article" date="2012" name="Mol. Plant Microbe Interact.">
        <title>N-terminal motifs in some plant disease resistance proteins function in membrane attachment and contribute to disease resistance.</title>
        <authorList>
            <person name="Takemoto D."/>
            <person name="Rafiqi M."/>
            <person name="Hurley U."/>
            <person name="Lawrence G.J."/>
            <person name="Bernoux M."/>
            <person name="Hardham A.R."/>
            <person name="Ellis J.G."/>
            <person name="Dodds P.N."/>
            <person name="Jones D.A."/>
        </authorList>
    </citation>
    <scope>SUBCELLULAR LOCATION</scope>
    <scope>MUTAGENESIS OF GLY-2; CYS-3; PHE-4 AND CYS-6</scope>
    <scope>MYRISTOYLATION AT GLY-2</scope>
</reference>
<reference key="11">
    <citation type="journal article" date="2014" name="Plant Physiol.">
        <title>Recognition of the protein kinase AVRPPHB SUSCEPTIBLE1 by the disease resistance protein RESISTANCE TO PSEUDOMONAS SYRINGAE5 is dependent on s-acylation and an exposed loop in AVRPPHB SUSCEPTIBLE1.</title>
        <authorList>
            <person name="Qi D."/>
            <person name="Dubiella U."/>
            <person name="Kim S.H."/>
            <person name="Sloss D.I."/>
            <person name="Dowen R.H."/>
            <person name="Dixon J.E."/>
            <person name="Innes R.W."/>
        </authorList>
    </citation>
    <scope>SUBCELLULAR LOCATION</scope>
    <scope>MUTAGENESIS OF GLY-2; CYS-3; CYS-6; GLY-98; GLY-103; SER-244 AND GLY-286</scope>
    <scope>PALMITOYLATION AT CYS-3 AND CYS-6</scope>
    <scope>MOTIF</scope>
</reference>
<feature type="initiator methionine" description="Removed" evidence="14">
    <location>
        <position position="1"/>
    </location>
</feature>
<feature type="chain" id="PRO_0000086482" description="Serine/threonine-protein kinase PBS1">
    <location>
        <begin position="2"/>
        <end position="456"/>
    </location>
</feature>
<feature type="domain" description="Protein kinase" evidence="2">
    <location>
        <begin position="86"/>
        <end position="363"/>
    </location>
</feature>
<feature type="region of interest" description="Disordered" evidence="3">
    <location>
        <begin position="1"/>
        <end position="57"/>
    </location>
</feature>
<feature type="region of interest" description="Disordered" evidence="3">
    <location>
        <begin position="368"/>
        <end position="456"/>
    </location>
</feature>
<feature type="short sequence motif" description="Recognition motif required for RPS5-mediated plant resistance to P.syringae" evidence="10">
    <location>
        <begin position="292"/>
        <end position="296"/>
    </location>
</feature>
<feature type="compositionally biased region" description="Basic and acidic residues" evidence="3">
    <location>
        <begin position="12"/>
        <end position="23"/>
    </location>
</feature>
<feature type="compositionally biased region" description="Polar residues" evidence="3">
    <location>
        <begin position="27"/>
        <end position="39"/>
    </location>
</feature>
<feature type="compositionally biased region" description="Basic and acidic residues" evidence="3">
    <location>
        <begin position="370"/>
        <end position="392"/>
    </location>
</feature>
<feature type="compositionally biased region" description="Basic and acidic residues" evidence="3">
    <location>
        <begin position="400"/>
        <end position="429"/>
    </location>
</feature>
<feature type="compositionally biased region" description="Polar residues" evidence="3">
    <location>
        <begin position="446"/>
        <end position="456"/>
    </location>
</feature>
<feature type="active site" description="Proton acceptor" evidence="2">
    <location>
        <position position="213"/>
    </location>
</feature>
<feature type="binding site" evidence="2">
    <location>
        <begin position="92"/>
        <end position="100"/>
    </location>
    <ligand>
        <name>ATP</name>
        <dbReference type="ChEBI" id="CHEBI:30616"/>
    </ligand>
</feature>
<feature type="binding site" evidence="2">
    <location>
        <position position="115"/>
    </location>
    <ligand>
        <name>ATP</name>
        <dbReference type="ChEBI" id="CHEBI:30616"/>
    </ligand>
</feature>
<feature type="site" description="Cleavage; by avrPphB">
    <location>
        <begin position="243"/>
        <end position="244"/>
    </location>
</feature>
<feature type="modified residue" description="Phosphoserine" evidence="17">
    <location>
        <position position="21"/>
    </location>
</feature>
<feature type="modified residue" description="Phosphotyrosine" evidence="1">
    <location>
        <position position="160"/>
    </location>
</feature>
<feature type="modified residue" description="Phosphoserine" evidence="1">
    <location>
        <position position="217"/>
    </location>
</feature>
<feature type="modified residue" description="Phosphoserine" evidence="1">
    <location>
        <position position="247"/>
    </location>
</feature>
<feature type="modified residue" description="Phosphothreonine" evidence="1">
    <location>
        <position position="248"/>
    </location>
</feature>
<feature type="modified residue" description="Phosphothreonine" evidence="1">
    <location>
        <position position="253"/>
    </location>
</feature>
<feature type="modified residue" description="Phosphotyrosine" evidence="1">
    <location>
        <position position="261"/>
    </location>
</feature>
<feature type="lipid moiety-binding region" description="N-myristoyl glycine" evidence="12">
    <location>
        <position position="2"/>
    </location>
</feature>
<feature type="lipid moiety-binding region" description="S-palmitoyl cysteine" evidence="10">
    <location>
        <position position="3"/>
    </location>
</feature>
<feature type="lipid moiety-binding region" description="S-palmitoyl cysteine" evidence="10">
    <location>
        <position position="6"/>
    </location>
</feature>
<feature type="mutagenesis site" description="Slightly affects plasma membrane location. Abolishes plasma membrane location; when associated with A-3 and A-6." evidence="8 10">
    <original>G</original>
    <variation>A</variation>
    <location>
        <position position="2"/>
    </location>
</feature>
<feature type="mutagenesis site" description="Affects plasma membrane location. Abolishes plasma membrane location; when associated with A-2 and A-6." evidence="8 10">
    <original>C</original>
    <variation>A</variation>
    <location>
        <position position="3"/>
    </location>
</feature>
<feature type="mutagenesis site" description="Affects plasma membrane location." evidence="8">
    <original>F</original>
    <variation>A</variation>
    <location>
        <position position="4"/>
    </location>
</feature>
<feature type="mutagenesis site" description="Affects plasma membrane location. Abolishes plasma membrane location; when associated with A-2 and A-3." evidence="8 10">
    <original>C</original>
    <variation>A</variation>
    <location>
        <position position="6"/>
    </location>
</feature>
<feature type="mutagenesis site" description="In pbs1-5; strongly impairs RPS5-mediated plant resistance to P.syringae." evidence="10">
    <original>G</original>
    <variation>E</variation>
    <location>
        <position position="98"/>
    </location>
</feature>
<feature type="mutagenesis site" description="In pbs1-3; strongly impairs cleavage by avrPphB and RPS5-mediated plant resistance to P.syringae." evidence="10">
    <original>G</original>
    <variation>R</variation>
    <location>
        <position position="103"/>
    </location>
</feature>
<feature type="mutagenesis site" description="Abolishes kinase activity and RPS5-mediated plant resistance to P.syringae." evidence="5 6 9">
    <original>K</original>
    <variation>N</variation>
    <location>
        <position position="115"/>
    </location>
</feature>
<feature type="mutagenesis site" description="Abolishes cleavage by avrPphB and RPS5-mediated plant resistance to P.syringae." evidence="5">
    <original>G</original>
    <variation>A</variation>
    <location>
        <position position="241"/>
    </location>
</feature>
<feature type="mutagenesis site" description="Strongly impairs cleavage by avrPphB and RPS5-mediated plant resistance to P.syringae." evidence="5">
    <original>D</original>
    <variation>A</variation>
    <location>
        <position position="242"/>
    </location>
</feature>
<feature type="mutagenesis site" description="Affects cleavage by avrPphB and RPS5-mediated plant resistance to P.syringae." evidence="5">
    <original>K</original>
    <variation>A</variation>
    <location>
        <position position="243"/>
    </location>
</feature>
<feature type="mutagenesis site" description="In pbs1-6; strongly impairs RPS5-mediated plant resistance to P.syringae." evidence="10">
    <original>S</original>
    <variation>F</variation>
    <location>
        <position position="244"/>
    </location>
</feature>
<feature type="mutagenesis site" description="In pbs1-2; strongly impairs RPS5-mediated plant resistance to P.syringae." evidence="4 6 9">
    <original>G</original>
    <variation>R</variation>
    <location>
        <position position="252"/>
    </location>
</feature>
<feature type="mutagenesis site" description="In pbs1-4; strongly impairs cleavage by avrPphB and RPS5-mediated plant resistance to P.syringae." evidence="10">
    <original>G</original>
    <variation>D</variation>
    <location>
        <position position="286"/>
    </location>
</feature>
<name>PBS1_ARATH</name>